<name>COBQ_BURVG</name>
<protein>
    <recommendedName>
        <fullName evidence="1">Cobyric acid synthase</fullName>
    </recommendedName>
</protein>
<evidence type="ECO:0000255" key="1">
    <source>
        <dbReference type="HAMAP-Rule" id="MF_00028"/>
    </source>
</evidence>
<evidence type="ECO:0000305" key="2"/>
<proteinExistence type="inferred from homology"/>
<feature type="chain" id="PRO_0000332325" description="Cobyric acid synthase">
    <location>
        <begin position="1"/>
        <end position="488"/>
    </location>
</feature>
<feature type="domain" description="GATase cobBQ-type" evidence="1">
    <location>
        <begin position="248"/>
        <end position="441"/>
    </location>
</feature>
<feature type="active site" description="Nucleophile" evidence="1">
    <location>
        <position position="328"/>
    </location>
</feature>
<feature type="active site" evidence="1">
    <location>
        <position position="433"/>
    </location>
</feature>
<keyword id="KW-0169">Cobalamin biosynthesis</keyword>
<keyword id="KW-0315">Glutamine amidotransferase</keyword>
<dbReference type="EMBL" id="CP000614">
    <property type="protein sequence ID" value="ABO55528.1"/>
    <property type="status" value="ALT_INIT"/>
    <property type="molecule type" value="Genomic_DNA"/>
</dbReference>
<dbReference type="SMR" id="A4JGX5"/>
<dbReference type="KEGG" id="bvi:Bcep1808_2530"/>
<dbReference type="eggNOG" id="COG1492">
    <property type="taxonomic scope" value="Bacteria"/>
</dbReference>
<dbReference type="HOGENOM" id="CLU_019250_2_2_4"/>
<dbReference type="UniPathway" id="UPA00148"/>
<dbReference type="Proteomes" id="UP000002287">
    <property type="component" value="Chromosome 1"/>
</dbReference>
<dbReference type="GO" id="GO:0015420">
    <property type="term" value="F:ABC-type vitamin B12 transporter activity"/>
    <property type="evidence" value="ECO:0007669"/>
    <property type="project" value="UniProtKB-UniRule"/>
</dbReference>
<dbReference type="GO" id="GO:0003824">
    <property type="term" value="F:catalytic activity"/>
    <property type="evidence" value="ECO:0007669"/>
    <property type="project" value="InterPro"/>
</dbReference>
<dbReference type="GO" id="GO:0009236">
    <property type="term" value="P:cobalamin biosynthetic process"/>
    <property type="evidence" value="ECO:0007669"/>
    <property type="project" value="UniProtKB-UniRule"/>
</dbReference>
<dbReference type="CDD" id="cd05389">
    <property type="entry name" value="CobQ_N"/>
    <property type="match status" value="1"/>
</dbReference>
<dbReference type="CDD" id="cd01750">
    <property type="entry name" value="GATase1_CobQ"/>
    <property type="match status" value="1"/>
</dbReference>
<dbReference type="Gene3D" id="3.40.50.880">
    <property type="match status" value="1"/>
</dbReference>
<dbReference type="Gene3D" id="3.40.50.300">
    <property type="entry name" value="P-loop containing nucleotide triphosphate hydrolases"/>
    <property type="match status" value="1"/>
</dbReference>
<dbReference type="HAMAP" id="MF_00028">
    <property type="entry name" value="CobQ"/>
    <property type="match status" value="1"/>
</dbReference>
<dbReference type="InterPro" id="IPR029062">
    <property type="entry name" value="Class_I_gatase-like"/>
</dbReference>
<dbReference type="InterPro" id="IPR002586">
    <property type="entry name" value="CobQ/CobB/MinD/ParA_Nub-bd_dom"/>
</dbReference>
<dbReference type="InterPro" id="IPR033949">
    <property type="entry name" value="CobQ_GATase1"/>
</dbReference>
<dbReference type="InterPro" id="IPR047045">
    <property type="entry name" value="CobQ_N"/>
</dbReference>
<dbReference type="InterPro" id="IPR004459">
    <property type="entry name" value="CobQ_synth"/>
</dbReference>
<dbReference type="InterPro" id="IPR011698">
    <property type="entry name" value="GATase_3"/>
</dbReference>
<dbReference type="InterPro" id="IPR027417">
    <property type="entry name" value="P-loop_NTPase"/>
</dbReference>
<dbReference type="NCBIfam" id="TIGR00313">
    <property type="entry name" value="cobQ"/>
    <property type="match status" value="1"/>
</dbReference>
<dbReference type="NCBIfam" id="NF001989">
    <property type="entry name" value="PRK00784.1"/>
    <property type="match status" value="1"/>
</dbReference>
<dbReference type="PANTHER" id="PTHR21343:SF1">
    <property type="entry name" value="COBYRIC ACID SYNTHASE"/>
    <property type="match status" value="1"/>
</dbReference>
<dbReference type="PANTHER" id="PTHR21343">
    <property type="entry name" value="DETHIOBIOTIN SYNTHETASE"/>
    <property type="match status" value="1"/>
</dbReference>
<dbReference type="Pfam" id="PF01656">
    <property type="entry name" value="CbiA"/>
    <property type="match status" value="1"/>
</dbReference>
<dbReference type="Pfam" id="PF07685">
    <property type="entry name" value="GATase_3"/>
    <property type="match status" value="1"/>
</dbReference>
<dbReference type="SUPFAM" id="SSF52317">
    <property type="entry name" value="Class I glutamine amidotransferase-like"/>
    <property type="match status" value="1"/>
</dbReference>
<dbReference type="SUPFAM" id="SSF52540">
    <property type="entry name" value="P-loop containing nucleoside triphosphate hydrolases"/>
    <property type="match status" value="1"/>
</dbReference>
<dbReference type="PROSITE" id="PS51274">
    <property type="entry name" value="GATASE_COBBQ"/>
    <property type="match status" value="1"/>
</dbReference>
<reference key="1">
    <citation type="submission" date="2007-03" db="EMBL/GenBank/DDBJ databases">
        <title>Complete sequence of chromosome 1 of Burkholderia vietnamiensis G4.</title>
        <authorList>
            <consortium name="US DOE Joint Genome Institute"/>
            <person name="Copeland A."/>
            <person name="Lucas S."/>
            <person name="Lapidus A."/>
            <person name="Barry K."/>
            <person name="Detter J.C."/>
            <person name="Glavina del Rio T."/>
            <person name="Hammon N."/>
            <person name="Israni S."/>
            <person name="Dalin E."/>
            <person name="Tice H."/>
            <person name="Pitluck S."/>
            <person name="Chain P."/>
            <person name="Malfatti S."/>
            <person name="Shin M."/>
            <person name="Vergez L."/>
            <person name="Schmutz J."/>
            <person name="Larimer F."/>
            <person name="Land M."/>
            <person name="Hauser L."/>
            <person name="Kyrpides N."/>
            <person name="Tiedje J."/>
            <person name="Richardson P."/>
        </authorList>
    </citation>
    <scope>NUCLEOTIDE SEQUENCE [LARGE SCALE GENOMIC DNA]</scope>
    <source>
        <strain>G4 / LMG 22486</strain>
    </source>
</reference>
<sequence>MIQGTTSDAGKSTLVAGLCRLARRAGARVAPFKPQNMALNSAVTADGGEIGRAQALQALAAGVAPHTDFNPVLLKPTSDRGAQVIIHGAARMNLDARAYHDYKPVAFDAVLESYARLRAGYDTVIVEGAGSPAEINLRDGDIANMGFAERVDCPVVLVADIDRGGVFAHLVGTLACLSDSERARVRGFVINRFRGDIGLLEPGLDWLRAQTGKPVFGVLPYLHGLLLDAEDMLPRQARSAATRDGAGVLRVVVPALPRISNHTDFDPLRAHPQVEFTYWKSGPVPAADLLILPGSKSVQRDLQWLRDAGWDTVIRRHLRYGGKVIGICGGMQMLGRTLDDPLGLEGAPGSVPGLGLFDFDTTLLPHKTLKNVTGQLALPGAPAVRGYEIHMGDTRGPALAAPALQLAADDAAGGSRADGALSADGQLLATYVHGLFDTPAACAALLAWAGLDGGERIDYPALREASIERLADSFAEHLDLRALYAEFR</sequence>
<comment type="function">
    <text evidence="1">Catalyzes amidations at positions B, D, E, and G on adenosylcobyrinic A,C-diamide. NH(2) groups are provided by glutamine, and one molecule of ATP is hydrogenolyzed for each amidation.</text>
</comment>
<comment type="pathway">
    <text evidence="1">Cofactor biosynthesis; adenosylcobalamin biosynthesis.</text>
</comment>
<comment type="similarity">
    <text evidence="1">Belongs to the CobB/CobQ family. CobQ subfamily.</text>
</comment>
<comment type="sequence caution" evidence="2">
    <conflict type="erroneous initiation">
        <sequence resource="EMBL-CDS" id="ABO55528"/>
    </conflict>
</comment>
<organism>
    <name type="scientific">Burkholderia vietnamiensis (strain G4 / LMG 22486)</name>
    <name type="common">Burkholderia cepacia (strain R1808)</name>
    <dbReference type="NCBI Taxonomy" id="269482"/>
    <lineage>
        <taxon>Bacteria</taxon>
        <taxon>Pseudomonadati</taxon>
        <taxon>Pseudomonadota</taxon>
        <taxon>Betaproteobacteria</taxon>
        <taxon>Burkholderiales</taxon>
        <taxon>Burkholderiaceae</taxon>
        <taxon>Burkholderia</taxon>
        <taxon>Burkholderia cepacia complex</taxon>
    </lineage>
</organism>
<gene>
    <name evidence="1" type="primary">cobQ</name>
    <name type="ordered locus">Bcep1808_2530</name>
</gene>
<accession>A4JGX5</accession>